<gene>
    <name evidence="1" type="primary">leuS</name>
    <name type="ordered locus">SSP1006</name>
</gene>
<protein>
    <recommendedName>
        <fullName evidence="1">Leucine--tRNA ligase</fullName>
        <ecNumber evidence="1">6.1.1.4</ecNumber>
    </recommendedName>
    <alternativeName>
        <fullName evidence="1">Leucyl-tRNA synthetase</fullName>
        <shortName evidence="1">LeuRS</shortName>
    </alternativeName>
</protein>
<organism>
    <name type="scientific">Staphylococcus saprophyticus subsp. saprophyticus (strain ATCC 15305 / DSM 20229 / NCIMB 8711 / NCTC 7292 / S-41)</name>
    <dbReference type="NCBI Taxonomy" id="342451"/>
    <lineage>
        <taxon>Bacteria</taxon>
        <taxon>Bacillati</taxon>
        <taxon>Bacillota</taxon>
        <taxon>Bacilli</taxon>
        <taxon>Bacillales</taxon>
        <taxon>Staphylococcaceae</taxon>
        <taxon>Staphylococcus</taxon>
    </lineage>
</organism>
<dbReference type="EC" id="6.1.1.4" evidence="1"/>
<dbReference type="EMBL" id="AP008934">
    <property type="protein sequence ID" value="BAE18151.1"/>
    <property type="molecule type" value="Genomic_DNA"/>
</dbReference>
<dbReference type="RefSeq" id="WP_011302857.1">
    <property type="nucleotide sequence ID" value="NZ_MTGA01000033.1"/>
</dbReference>
<dbReference type="SMR" id="Q49YI8"/>
<dbReference type="GeneID" id="3615876"/>
<dbReference type="KEGG" id="ssp:SSP1006"/>
<dbReference type="PATRIC" id="fig|342451.11.peg.1005"/>
<dbReference type="eggNOG" id="COG0495">
    <property type="taxonomic scope" value="Bacteria"/>
</dbReference>
<dbReference type="HOGENOM" id="CLU_004427_0_0_9"/>
<dbReference type="OrthoDB" id="9810365at2"/>
<dbReference type="Proteomes" id="UP000006371">
    <property type="component" value="Chromosome"/>
</dbReference>
<dbReference type="GO" id="GO:0005829">
    <property type="term" value="C:cytosol"/>
    <property type="evidence" value="ECO:0007669"/>
    <property type="project" value="TreeGrafter"/>
</dbReference>
<dbReference type="GO" id="GO:0002161">
    <property type="term" value="F:aminoacyl-tRNA deacylase activity"/>
    <property type="evidence" value="ECO:0007669"/>
    <property type="project" value="InterPro"/>
</dbReference>
<dbReference type="GO" id="GO:0005524">
    <property type="term" value="F:ATP binding"/>
    <property type="evidence" value="ECO:0007669"/>
    <property type="project" value="UniProtKB-UniRule"/>
</dbReference>
<dbReference type="GO" id="GO:0004823">
    <property type="term" value="F:leucine-tRNA ligase activity"/>
    <property type="evidence" value="ECO:0007669"/>
    <property type="project" value="UniProtKB-UniRule"/>
</dbReference>
<dbReference type="GO" id="GO:0006429">
    <property type="term" value="P:leucyl-tRNA aminoacylation"/>
    <property type="evidence" value="ECO:0007669"/>
    <property type="project" value="UniProtKB-UniRule"/>
</dbReference>
<dbReference type="CDD" id="cd07958">
    <property type="entry name" value="Anticodon_Ia_Leu_BEm"/>
    <property type="match status" value="1"/>
</dbReference>
<dbReference type="CDD" id="cd00812">
    <property type="entry name" value="LeuRS_core"/>
    <property type="match status" value="1"/>
</dbReference>
<dbReference type="FunFam" id="1.10.730.10:FF:000012">
    <property type="entry name" value="Leucine--tRNA ligase"/>
    <property type="match status" value="1"/>
</dbReference>
<dbReference type="FunFam" id="3.10.20.590:FF:000001">
    <property type="entry name" value="Leucine--tRNA ligase"/>
    <property type="match status" value="1"/>
</dbReference>
<dbReference type="FunFam" id="3.40.50.620:FF:000056">
    <property type="entry name" value="Leucine--tRNA ligase"/>
    <property type="match status" value="1"/>
</dbReference>
<dbReference type="FunFam" id="3.40.50.620:FF:000077">
    <property type="entry name" value="Leucine--tRNA ligase"/>
    <property type="match status" value="1"/>
</dbReference>
<dbReference type="FunFam" id="1.10.730.10:FF:000011">
    <property type="entry name" value="Leucine--tRNA ligase chloroplastic/mitochondrial"/>
    <property type="match status" value="1"/>
</dbReference>
<dbReference type="Gene3D" id="3.10.20.590">
    <property type="match status" value="1"/>
</dbReference>
<dbReference type="Gene3D" id="3.40.50.620">
    <property type="entry name" value="HUPs"/>
    <property type="match status" value="2"/>
</dbReference>
<dbReference type="Gene3D" id="1.10.730.10">
    <property type="entry name" value="Isoleucyl-tRNA Synthetase, Domain 1"/>
    <property type="match status" value="1"/>
</dbReference>
<dbReference type="HAMAP" id="MF_00049_B">
    <property type="entry name" value="Leu_tRNA_synth_B"/>
    <property type="match status" value="1"/>
</dbReference>
<dbReference type="InterPro" id="IPR001412">
    <property type="entry name" value="aa-tRNA-synth_I_CS"/>
</dbReference>
<dbReference type="InterPro" id="IPR002300">
    <property type="entry name" value="aa-tRNA-synth_Ia"/>
</dbReference>
<dbReference type="InterPro" id="IPR002302">
    <property type="entry name" value="Leu-tRNA-ligase"/>
</dbReference>
<dbReference type="InterPro" id="IPR025709">
    <property type="entry name" value="Leu_tRNA-synth_edit"/>
</dbReference>
<dbReference type="InterPro" id="IPR013155">
    <property type="entry name" value="M/V/L/I-tRNA-synth_anticd-bd"/>
</dbReference>
<dbReference type="InterPro" id="IPR015413">
    <property type="entry name" value="Methionyl/Leucyl_tRNA_Synth"/>
</dbReference>
<dbReference type="InterPro" id="IPR014729">
    <property type="entry name" value="Rossmann-like_a/b/a_fold"/>
</dbReference>
<dbReference type="InterPro" id="IPR009080">
    <property type="entry name" value="tRNAsynth_Ia_anticodon-bd"/>
</dbReference>
<dbReference type="InterPro" id="IPR009008">
    <property type="entry name" value="Val/Leu/Ile-tRNA-synth_edit"/>
</dbReference>
<dbReference type="NCBIfam" id="TIGR00396">
    <property type="entry name" value="leuS_bact"/>
    <property type="match status" value="1"/>
</dbReference>
<dbReference type="PANTHER" id="PTHR43740:SF2">
    <property type="entry name" value="LEUCINE--TRNA LIGASE, MITOCHONDRIAL"/>
    <property type="match status" value="1"/>
</dbReference>
<dbReference type="PANTHER" id="PTHR43740">
    <property type="entry name" value="LEUCYL-TRNA SYNTHETASE"/>
    <property type="match status" value="1"/>
</dbReference>
<dbReference type="Pfam" id="PF08264">
    <property type="entry name" value="Anticodon_1"/>
    <property type="match status" value="1"/>
</dbReference>
<dbReference type="Pfam" id="PF00133">
    <property type="entry name" value="tRNA-synt_1"/>
    <property type="match status" value="1"/>
</dbReference>
<dbReference type="Pfam" id="PF13603">
    <property type="entry name" value="tRNA-synt_1_2"/>
    <property type="match status" value="1"/>
</dbReference>
<dbReference type="Pfam" id="PF09334">
    <property type="entry name" value="tRNA-synt_1g"/>
    <property type="match status" value="1"/>
</dbReference>
<dbReference type="PRINTS" id="PR00985">
    <property type="entry name" value="TRNASYNTHLEU"/>
</dbReference>
<dbReference type="SUPFAM" id="SSF47323">
    <property type="entry name" value="Anticodon-binding domain of a subclass of class I aminoacyl-tRNA synthetases"/>
    <property type="match status" value="1"/>
</dbReference>
<dbReference type="SUPFAM" id="SSF52374">
    <property type="entry name" value="Nucleotidylyl transferase"/>
    <property type="match status" value="1"/>
</dbReference>
<dbReference type="SUPFAM" id="SSF50677">
    <property type="entry name" value="ValRS/IleRS/LeuRS editing domain"/>
    <property type="match status" value="1"/>
</dbReference>
<dbReference type="PROSITE" id="PS00178">
    <property type="entry name" value="AA_TRNA_LIGASE_I"/>
    <property type="match status" value="1"/>
</dbReference>
<sequence length="804" mass="91860">MNYSHNEIEKKWQDYWEANKTFKTSDNLGQKKFYALDMFPYPSGAGLHVGHPEGYTATDIISRYKRMLGYNVLHPMGWDAFGLPAEQYALDTGNDPREFTKENIQTFKRQIKELGFSYDWDREVNTTDPEYYKWTQWIFIQLYNKGLAYVDEVAVNWCPALGTVLSNEEVIDGVSERGGHPVYRRPMKQWVLKITEYADRLLEDLDELDWPESLKDMQRNWIGRSEGASVAFDVKDYNEQIEVFTTRPDTIYGASFLVLSPEHELVDLITTEDNKDDVEAYQKEAAKKSDLERTGLSKEKSGVFTGAYAVNPLSGQQVPIWIADYVLSTYGTGAVMAVPSGDQRDYEFAKTFDLPIIEVIEGGDMSKEAYTGDGPHINSGELNGLYNEAAIEKAIELLENKNAGTRKVNYKLRDWLFSRQRYWGEPIPVIHWEDGSMTTVPEDELPLLLPETDEIKPSGTGESPLANIDEFVNVVDEATGMKGRRETNTMPQWAGSCWYYLRYIDPDNEQMLADPEKLKHWLPVDLYIGGVEHAVLHLLYARFWHKVLFDLGVVPTKEPFQKLFNQGMILGEGNEKMSKSKGNVINPDDIVKSHGADTLRLYEMFMGPLDAAIAWSENGLDGSRRFLDRIWRLLITEDGSISNKVVNNHSKALDKSYHQTVKKVTEDYNSLNFNTAISQLMVFINDCYKAEEIYKPYIEGFIKMLAPIAPHISEELWSRLGHDETITYQPWPSYDEALLVDDEIEIVVQVNGKVRAKINVSKDIAKEEMEQIALDNEHVKSEIEGKDIKKVIAVPKKLVNIVAK</sequence>
<reference key="1">
    <citation type="journal article" date="2005" name="Proc. Natl. Acad. Sci. U.S.A.">
        <title>Whole genome sequence of Staphylococcus saprophyticus reveals the pathogenesis of uncomplicated urinary tract infection.</title>
        <authorList>
            <person name="Kuroda M."/>
            <person name="Yamashita A."/>
            <person name="Hirakawa H."/>
            <person name="Kumano M."/>
            <person name="Morikawa K."/>
            <person name="Higashide M."/>
            <person name="Maruyama A."/>
            <person name="Inose Y."/>
            <person name="Matoba K."/>
            <person name="Toh H."/>
            <person name="Kuhara S."/>
            <person name="Hattori M."/>
            <person name="Ohta T."/>
        </authorList>
    </citation>
    <scope>NUCLEOTIDE SEQUENCE [LARGE SCALE GENOMIC DNA]</scope>
    <source>
        <strain>ATCC 15305 / DSM 20229 / NCIMB 8711 / NCTC 7292 / S-41</strain>
    </source>
</reference>
<accession>Q49YI8</accession>
<evidence type="ECO:0000255" key="1">
    <source>
        <dbReference type="HAMAP-Rule" id="MF_00049"/>
    </source>
</evidence>
<name>SYL_STAS1</name>
<comment type="catalytic activity">
    <reaction evidence="1">
        <text>tRNA(Leu) + L-leucine + ATP = L-leucyl-tRNA(Leu) + AMP + diphosphate</text>
        <dbReference type="Rhea" id="RHEA:11688"/>
        <dbReference type="Rhea" id="RHEA-COMP:9613"/>
        <dbReference type="Rhea" id="RHEA-COMP:9622"/>
        <dbReference type="ChEBI" id="CHEBI:30616"/>
        <dbReference type="ChEBI" id="CHEBI:33019"/>
        <dbReference type="ChEBI" id="CHEBI:57427"/>
        <dbReference type="ChEBI" id="CHEBI:78442"/>
        <dbReference type="ChEBI" id="CHEBI:78494"/>
        <dbReference type="ChEBI" id="CHEBI:456215"/>
        <dbReference type="EC" id="6.1.1.4"/>
    </reaction>
</comment>
<comment type="subcellular location">
    <subcellularLocation>
        <location evidence="1">Cytoplasm</location>
    </subcellularLocation>
</comment>
<comment type="similarity">
    <text evidence="1">Belongs to the class-I aminoacyl-tRNA synthetase family.</text>
</comment>
<keyword id="KW-0030">Aminoacyl-tRNA synthetase</keyword>
<keyword id="KW-0067">ATP-binding</keyword>
<keyword id="KW-0963">Cytoplasm</keyword>
<keyword id="KW-0436">Ligase</keyword>
<keyword id="KW-0547">Nucleotide-binding</keyword>
<keyword id="KW-0648">Protein biosynthesis</keyword>
<keyword id="KW-1185">Reference proteome</keyword>
<feature type="chain" id="PRO_1000009441" description="Leucine--tRNA ligase">
    <location>
        <begin position="1"/>
        <end position="804"/>
    </location>
</feature>
<feature type="short sequence motif" description="'HIGH' region">
    <location>
        <begin position="40"/>
        <end position="51"/>
    </location>
</feature>
<feature type="short sequence motif" description="'KMSKS' region">
    <location>
        <begin position="576"/>
        <end position="580"/>
    </location>
</feature>
<feature type="binding site" evidence="1">
    <location>
        <position position="579"/>
    </location>
    <ligand>
        <name>ATP</name>
        <dbReference type="ChEBI" id="CHEBI:30616"/>
    </ligand>
</feature>
<proteinExistence type="inferred from homology"/>